<sequence>MPKILDGKKLAQEIELILQQAIESGLEVAKRRPGLAVLRVGDDPASGVYVNYKEKACDRIGVRSFAKHLKEDISLEELTETIKSLNEEKNVDGILLQLPLPSHLDEAALLRSIDPDKDADGLHPLNLGRLIKGEKGPRSCTPAGVMSLLERNQIKIEGKRAVVVGRSILVGKPMALMLEAANATVTIAHSRTKDLPSLTKEADLLVVAAGKPYLIGKNHVSENCVVIDVGIHRLPPDEENIKELKKTKLCGDVKIFEIEDKVAAYSPVPGGVGPMTVTMLLANTVDRWQKHCGLPLTISHLLP</sequence>
<organism>
    <name type="scientific">Prochlorococcus marinus (strain NATL1A)</name>
    <dbReference type="NCBI Taxonomy" id="167555"/>
    <lineage>
        <taxon>Bacteria</taxon>
        <taxon>Bacillati</taxon>
        <taxon>Cyanobacteriota</taxon>
        <taxon>Cyanophyceae</taxon>
        <taxon>Synechococcales</taxon>
        <taxon>Prochlorococcaceae</taxon>
        <taxon>Prochlorococcus</taxon>
    </lineage>
</organism>
<evidence type="ECO:0000255" key="1">
    <source>
        <dbReference type="HAMAP-Rule" id="MF_01576"/>
    </source>
</evidence>
<protein>
    <recommendedName>
        <fullName evidence="1">Bifunctional protein FolD</fullName>
    </recommendedName>
    <domain>
        <recommendedName>
            <fullName evidence="1">Methylenetetrahydrofolate dehydrogenase</fullName>
            <ecNumber evidence="1">1.5.1.5</ecNumber>
        </recommendedName>
    </domain>
    <domain>
        <recommendedName>
            <fullName evidence="1">Methenyltetrahydrofolate cyclohydrolase</fullName>
            <ecNumber evidence="1">3.5.4.9</ecNumber>
        </recommendedName>
    </domain>
</protein>
<gene>
    <name evidence="1" type="primary">folD</name>
    <name type="ordered locus">NATL1_15161</name>
</gene>
<keyword id="KW-0028">Amino-acid biosynthesis</keyword>
<keyword id="KW-0368">Histidine biosynthesis</keyword>
<keyword id="KW-0378">Hydrolase</keyword>
<keyword id="KW-0486">Methionine biosynthesis</keyword>
<keyword id="KW-0511">Multifunctional enzyme</keyword>
<keyword id="KW-0521">NADP</keyword>
<keyword id="KW-0554">One-carbon metabolism</keyword>
<keyword id="KW-0560">Oxidoreductase</keyword>
<keyword id="KW-0658">Purine biosynthesis</keyword>
<comment type="function">
    <text evidence="1">Catalyzes the oxidation of 5,10-methylenetetrahydrofolate to 5,10-methenyltetrahydrofolate and then the hydrolysis of 5,10-methenyltetrahydrofolate to 10-formyltetrahydrofolate.</text>
</comment>
<comment type="catalytic activity">
    <reaction evidence="1">
        <text>(6R)-5,10-methylene-5,6,7,8-tetrahydrofolate + NADP(+) = (6R)-5,10-methenyltetrahydrofolate + NADPH</text>
        <dbReference type="Rhea" id="RHEA:22812"/>
        <dbReference type="ChEBI" id="CHEBI:15636"/>
        <dbReference type="ChEBI" id="CHEBI:57455"/>
        <dbReference type="ChEBI" id="CHEBI:57783"/>
        <dbReference type="ChEBI" id="CHEBI:58349"/>
        <dbReference type="EC" id="1.5.1.5"/>
    </reaction>
</comment>
<comment type="catalytic activity">
    <reaction evidence="1">
        <text>(6R)-5,10-methenyltetrahydrofolate + H2O = (6R)-10-formyltetrahydrofolate + H(+)</text>
        <dbReference type="Rhea" id="RHEA:23700"/>
        <dbReference type="ChEBI" id="CHEBI:15377"/>
        <dbReference type="ChEBI" id="CHEBI:15378"/>
        <dbReference type="ChEBI" id="CHEBI:57455"/>
        <dbReference type="ChEBI" id="CHEBI:195366"/>
        <dbReference type="EC" id="3.5.4.9"/>
    </reaction>
</comment>
<comment type="pathway">
    <text evidence="1">One-carbon metabolism; tetrahydrofolate interconversion.</text>
</comment>
<comment type="subunit">
    <text evidence="1">Homodimer.</text>
</comment>
<comment type="similarity">
    <text evidence="1">Belongs to the tetrahydrofolate dehydrogenase/cyclohydrolase family.</text>
</comment>
<accession>A2C3L3</accession>
<name>FOLD_PROM1</name>
<dbReference type="EC" id="1.5.1.5" evidence="1"/>
<dbReference type="EC" id="3.5.4.9" evidence="1"/>
<dbReference type="EMBL" id="CP000553">
    <property type="protein sequence ID" value="ABM76073.1"/>
    <property type="molecule type" value="Genomic_DNA"/>
</dbReference>
<dbReference type="RefSeq" id="WP_011824095.1">
    <property type="nucleotide sequence ID" value="NC_008819.1"/>
</dbReference>
<dbReference type="SMR" id="A2C3L3"/>
<dbReference type="KEGG" id="pme:NATL1_15161"/>
<dbReference type="eggNOG" id="COG0190">
    <property type="taxonomic scope" value="Bacteria"/>
</dbReference>
<dbReference type="HOGENOM" id="CLU_034045_2_1_3"/>
<dbReference type="UniPathway" id="UPA00193"/>
<dbReference type="Proteomes" id="UP000002592">
    <property type="component" value="Chromosome"/>
</dbReference>
<dbReference type="GO" id="GO:0005829">
    <property type="term" value="C:cytosol"/>
    <property type="evidence" value="ECO:0007669"/>
    <property type="project" value="TreeGrafter"/>
</dbReference>
<dbReference type="GO" id="GO:0004477">
    <property type="term" value="F:methenyltetrahydrofolate cyclohydrolase activity"/>
    <property type="evidence" value="ECO:0007669"/>
    <property type="project" value="UniProtKB-UniRule"/>
</dbReference>
<dbReference type="GO" id="GO:0004488">
    <property type="term" value="F:methylenetetrahydrofolate dehydrogenase (NADP+) activity"/>
    <property type="evidence" value="ECO:0007669"/>
    <property type="project" value="UniProtKB-UniRule"/>
</dbReference>
<dbReference type="GO" id="GO:0000105">
    <property type="term" value="P:L-histidine biosynthetic process"/>
    <property type="evidence" value="ECO:0007669"/>
    <property type="project" value="UniProtKB-KW"/>
</dbReference>
<dbReference type="GO" id="GO:0009086">
    <property type="term" value="P:methionine biosynthetic process"/>
    <property type="evidence" value="ECO:0007669"/>
    <property type="project" value="UniProtKB-KW"/>
</dbReference>
<dbReference type="GO" id="GO:0006164">
    <property type="term" value="P:purine nucleotide biosynthetic process"/>
    <property type="evidence" value="ECO:0007669"/>
    <property type="project" value="UniProtKB-KW"/>
</dbReference>
<dbReference type="GO" id="GO:0035999">
    <property type="term" value="P:tetrahydrofolate interconversion"/>
    <property type="evidence" value="ECO:0007669"/>
    <property type="project" value="UniProtKB-UniRule"/>
</dbReference>
<dbReference type="CDD" id="cd01080">
    <property type="entry name" value="NAD_bind_m-THF_DH_Cyclohyd"/>
    <property type="match status" value="1"/>
</dbReference>
<dbReference type="FunFam" id="3.40.50.720:FF:000006">
    <property type="entry name" value="Bifunctional protein FolD"/>
    <property type="match status" value="1"/>
</dbReference>
<dbReference type="FunFam" id="3.40.50.10860:FF:000005">
    <property type="entry name" value="C-1-tetrahydrofolate synthase, cytoplasmic, putative"/>
    <property type="match status" value="1"/>
</dbReference>
<dbReference type="Gene3D" id="3.40.50.10860">
    <property type="entry name" value="Leucine Dehydrogenase, chain A, domain 1"/>
    <property type="match status" value="1"/>
</dbReference>
<dbReference type="Gene3D" id="3.40.50.720">
    <property type="entry name" value="NAD(P)-binding Rossmann-like Domain"/>
    <property type="match status" value="1"/>
</dbReference>
<dbReference type="HAMAP" id="MF_01576">
    <property type="entry name" value="THF_DHG_CYH"/>
    <property type="match status" value="1"/>
</dbReference>
<dbReference type="InterPro" id="IPR046346">
    <property type="entry name" value="Aminoacid_DH-like_N_sf"/>
</dbReference>
<dbReference type="InterPro" id="IPR036291">
    <property type="entry name" value="NAD(P)-bd_dom_sf"/>
</dbReference>
<dbReference type="InterPro" id="IPR000672">
    <property type="entry name" value="THF_DH/CycHdrlase"/>
</dbReference>
<dbReference type="InterPro" id="IPR020630">
    <property type="entry name" value="THF_DH/CycHdrlase_cat_dom"/>
</dbReference>
<dbReference type="InterPro" id="IPR020867">
    <property type="entry name" value="THF_DH/CycHdrlase_CS"/>
</dbReference>
<dbReference type="InterPro" id="IPR020631">
    <property type="entry name" value="THF_DH/CycHdrlase_NAD-bd_dom"/>
</dbReference>
<dbReference type="NCBIfam" id="NF010783">
    <property type="entry name" value="PRK14186.1"/>
    <property type="match status" value="1"/>
</dbReference>
<dbReference type="PANTHER" id="PTHR48099:SF5">
    <property type="entry name" value="C-1-TETRAHYDROFOLATE SYNTHASE, CYTOPLASMIC"/>
    <property type="match status" value="1"/>
</dbReference>
<dbReference type="PANTHER" id="PTHR48099">
    <property type="entry name" value="C-1-TETRAHYDROFOLATE SYNTHASE, CYTOPLASMIC-RELATED"/>
    <property type="match status" value="1"/>
</dbReference>
<dbReference type="Pfam" id="PF00763">
    <property type="entry name" value="THF_DHG_CYH"/>
    <property type="match status" value="1"/>
</dbReference>
<dbReference type="Pfam" id="PF02882">
    <property type="entry name" value="THF_DHG_CYH_C"/>
    <property type="match status" value="1"/>
</dbReference>
<dbReference type="PRINTS" id="PR00085">
    <property type="entry name" value="THFDHDRGNASE"/>
</dbReference>
<dbReference type="SUPFAM" id="SSF53223">
    <property type="entry name" value="Aminoacid dehydrogenase-like, N-terminal domain"/>
    <property type="match status" value="1"/>
</dbReference>
<dbReference type="SUPFAM" id="SSF51735">
    <property type="entry name" value="NAD(P)-binding Rossmann-fold domains"/>
    <property type="match status" value="1"/>
</dbReference>
<dbReference type="PROSITE" id="PS00767">
    <property type="entry name" value="THF_DHG_CYH_2"/>
    <property type="match status" value="1"/>
</dbReference>
<feature type="chain" id="PRO_0000305865" description="Bifunctional protein FolD">
    <location>
        <begin position="1"/>
        <end position="303"/>
    </location>
</feature>
<feature type="binding site" evidence="1">
    <location>
        <begin position="165"/>
        <end position="167"/>
    </location>
    <ligand>
        <name>NADP(+)</name>
        <dbReference type="ChEBI" id="CHEBI:58349"/>
    </ligand>
</feature>
<feature type="binding site" evidence="1">
    <location>
        <position position="190"/>
    </location>
    <ligand>
        <name>NADP(+)</name>
        <dbReference type="ChEBI" id="CHEBI:58349"/>
    </ligand>
</feature>
<feature type="binding site" evidence="1">
    <location>
        <position position="231"/>
    </location>
    <ligand>
        <name>NADP(+)</name>
        <dbReference type="ChEBI" id="CHEBI:58349"/>
    </ligand>
</feature>
<proteinExistence type="inferred from homology"/>
<reference key="1">
    <citation type="journal article" date="2007" name="PLoS Genet.">
        <title>Patterns and implications of gene gain and loss in the evolution of Prochlorococcus.</title>
        <authorList>
            <person name="Kettler G.C."/>
            <person name="Martiny A.C."/>
            <person name="Huang K."/>
            <person name="Zucker J."/>
            <person name="Coleman M.L."/>
            <person name="Rodrigue S."/>
            <person name="Chen F."/>
            <person name="Lapidus A."/>
            <person name="Ferriera S."/>
            <person name="Johnson J."/>
            <person name="Steglich C."/>
            <person name="Church G.M."/>
            <person name="Richardson P."/>
            <person name="Chisholm S.W."/>
        </authorList>
    </citation>
    <scope>NUCLEOTIDE SEQUENCE [LARGE SCALE GENOMIC DNA]</scope>
    <source>
        <strain>NATL1A</strain>
    </source>
</reference>